<dbReference type="EC" id="7.1.1.-" evidence="1"/>
<dbReference type="EMBL" id="CP000554">
    <property type="protein sequence ID" value="ABM79396.1"/>
    <property type="molecule type" value="Genomic_DNA"/>
</dbReference>
<dbReference type="RefSeq" id="WP_011827239.1">
    <property type="nucleotide sequence ID" value="NC_008820.1"/>
</dbReference>
<dbReference type="SMR" id="A2CD36"/>
<dbReference type="STRING" id="59922.P9303_26661"/>
<dbReference type="KEGG" id="pmf:P9303_26661"/>
<dbReference type="HOGENOM" id="CLU_137431_0_0_3"/>
<dbReference type="BioCyc" id="PMAR59922:G1G80-2336-MONOMER"/>
<dbReference type="Proteomes" id="UP000002274">
    <property type="component" value="Chromosome"/>
</dbReference>
<dbReference type="GO" id="GO:0031676">
    <property type="term" value="C:plasma membrane-derived thylakoid membrane"/>
    <property type="evidence" value="ECO:0007669"/>
    <property type="project" value="UniProtKB-SubCell"/>
</dbReference>
<dbReference type="GO" id="GO:0016655">
    <property type="term" value="F:oxidoreductase activity, acting on NAD(P)H, quinone or similar compound as acceptor"/>
    <property type="evidence" value="ECO:0007669"/>
    <property type="project" value="UniProtKB-UniRule"/>
</dbReference>
<dbReference type="GO" id="GO:0048038">
    <property type="term" value="F:quinone binding"/>
    <property type="evidence" value="ECO:0007669"/>
    <property type="project" value="UniProtKB-KW"/>
</dbReference>
<dbReference type="HAMAP" id="MF_01352">
    <property type="entry name" value="NDH1_NDH1M"/>
    <property type="match status" value="1"/>
</dbReference>
<dbReference type="InterPro" id="IPR018922">
    <property type="entry name" value="NdhM"/>
</dbReference>
<dbReference type="PANTHER" id="PTHR36900">
    <property type="entry name" value="NAD(P)H-QUINONE OXIDOREDUCTASE SUBUNIT M, CHLOROPLASTIC"/>
    <property type="match status" value="1"/>
</dbReference>
<dbReference type="PANTHER" id="PTHR36900:SF1">
    <property type="entry name" value="NAD(P)H-QUINONE OXIDOREDUCTASE SUBUNIT M, CHLOROPLASTIC"/>
    <property type="match status" value="1"/>
</dbReference>
<dbReference type="Pfam" id="PF10664">
    <property type="entry name" value="NdhM"/>
    <property type="match status" value="1"/>
</dbReference>
<comment type="function">
    <text evidence="1">NDH-1 shuttles electrons from an unknown electron donor, via FMN and iron-sulfur (Fe-S) centers, to quinones in the respiratory and/or the photosynthetic chain. The immediate electron acceptor for the enzyme in this species is believed to be plastoquinone. Couples the redox reaction to proton translocation, and thus conserves the redox energy in a proton gradient. Cyanobacterial NDH-1 also plays a role in inorganic carbon-concentration.</text>
</comment>
<comment type="catalytic activity">
    <reaction evidence="1">
        <text>a plastoquinone + NADH + (n+1) H(+)(in) = a plastoquinol + NAD(+) + n H(+)(out)</text>
        <dbReference type="Rhea" id="RHEA:42608"/>
        <dbReference type="Rhea" id="RHEA-COMP:9561"/>
        <dbReference type="Rhea" id="RHEA-COMP:9562"/>
        <dbReference type="ChEBI" id="CHEBI:15378"/>
        <dbReference type="ChEBI" id="CHEBI:17757"/>
        <dbReference type="ChEBI" id="CHEBI:57540"/>
        <dbReference type="ChEBI" id="CHEBI:57945"/>
        <dbReference type="ChEBI" id="CHEBI:62192"/>
    </reaction>
</comment>
<comment type="catalytic activity">
    <reaction evidence="1">
        <text>a plastoquinone + NADPH + (n+1) H(+)(in) = a plastoquinol + NADP(+) + n H(+)(out)</text>
        <dbReference type="Rhea" id="RHEA:42612"/>
        <dbReference type="Rhea" id="RHEA-COMP:9561"/>
        <dbReference type="Rhea" id="RHEA-COMP:9562"/>
        <dbReference type="ChEBI" id="CHEBI:15378"/>
        <dbReference type="ChEBI" id="CHEBI:17757"/>
        <dbReference type="ChEBI" id="CHEBI:57783"/>
        <dbReference type="ChEBI" id="CHEBI:58349"/>
        <dbReference type="ChEBI" id="CHEBI:62192"/>
    </reaction>
</comment>
<comment type="subunit">
    <text evidence="1">NDH-1 can be composed of about 15 different subunits; different subcomplexes with different compositions have been identified which probably have different functions.</text>
</comment>
<comment type="subcellular location">
    <subcellularLocation>
        <location evidence="1">Cellular thylakoid membrane</location>
        <topology evidence="1">Peripheral membrane protein</topology>
        <orientation evidence="1">Cytoplasmic side</orientation>
    </subcellularLocation>
</comment>
<comment type="similarity">
    <text evidence="1">Belongs to the complex I NdhM subunit family.</text>
</comment>
<reference key="1">
    <citation type="journal article" date="2007" name="PLoS Genet.">
        <title>Patterns and implications of gene gain and loss in the evolution of Prochlorococcus.</title>
        <authorList>
            <person name="Kettler G.C."/>
            <person name="Martiny A.C."/>
            <person name="Huang K."/>
            <person name="Zucker J."/>
            <person name="Coleman M.L."/>
            <person name="Rodrigue S."/>
            <person name="Chen F."/>
            <person name="Lapidus A."/>
            <person name="Ferriera S."/>
            <person name="Johnson J."/>
            <person name="Steglich C."/>
            <person name="Church G.M."/>
            <person name="Richardson P."/>
            <person name="Chisholm S.W."/>
        </authorList>
    </citation>
    <scope>NUCLEOTIDE SEQUENCE [LARGE SCALE GENOMIC DNA]</scope>
    <source>
        <strain>MIT 9303</strain>
    </source>
</reference>
<feature type="chain" id="PRO_0000352190" description="NAD(P)H-quinone oxidoreductase subunit M">
    <location>
        <begin position="1"/>
        <end position="115"/>
    </location>
</feature>
<sequence>MNETLLKCTTRHVRIFTARVENNDLVPDPDQLTLDLDPDNEFLWTESVIKEIQQRFAELVASHAGGELSDYNLRKIGSELEGTIRKLLQAGKLSYNPECRVLNYSMGLPRTPELL</sequence>
<organism>
    <name type="scientific">Prochlorococcus marinus (strain MIT 9303)</name>
    <dbReference type="NCBI Taxonomy" id="59922"/>
    <lineage>
        <taxon>Bacteria</taxon>
        <taxon>Bacillati</taxon>
        <taxon>Cyanobacteriota</taxon>
        <taxon>Cyanophyceae</taxon>
        <taxon>Synechococcales</taxon>
        <taxon>Prochlorococcaceae</taxon>
        <taxon>Prochlorococcus</taxon>
    </lineage>
</organism>
<proteinExistence type="inferred from homology"/>
<name>NDHM_PROM3</name>
<keyword id="KW-0472">Membrane</keyword>
<keyword id="KW-0520">NAD</keyword>
<keyword id="KW-0521">NADP</keyword>
<keyword id="KW-0618">Plastoquinone</keyword>
<keyword id="KW-0874">Quinone</keyword>
<keyword id="KW-0793">Thylakoid</keyword>
<keyword id="KW-1278">Translocase</keyword>
<keyword id="KW-0813">Transport</keyword>
<accession>A2CD36</accession>
<gene>
    <name evidence="1" type="primary">ndhM</name>
    <name type="ordered locus">P9303_26661</name>
</gene>
<protein>
    <recommendedName>
        <fullName evidence="1">NAD(P)H-quinone oxidoreductase subunit M</fullName>
        <ecNumber evidence="1">7.1.1.-</ecNumber>
    </recommendedName>
    <alternativeName>
        <fullName evidence="1">NAD(P)H dehydrogenase I subunit M</fullName>
        <shortName evidence="1">NDH-1 subunit M</shortName>
        <shortName evidence="1">NDH-M</shortName>
    </alternativeName>
</protein>
<evidence type="ECO:0000255" key="1">
    <source>
        <dbReference type="HAMAP-Rule" id="MF_01352"/>
    </source>
</evidence>